<dbReference type="EMBL" id="CP000254">
    <property type="protein sequence ID" value="ABD41956.1"/>
    <property type="molecule type" value="Genomic_DNA"/>
</dbReference>
<dbReference type="RefSeq" id="WP_011449214.1">
    <property type="nucleotide sequence ID" value="NC_007796.1"/>
</dbReference>
<dbReference type="SMR" id="Q2FU93"/>
<dbReference type="FunCoup" id="Q2FU93">
    <property type="interactions" value="146"/>
</dbReference>
<dbReference type="STRING" id="323259.Mhun_2251"/>
<dbReference type="EnsemblBacteria" id="ABD41956">
    <property type="protein sequence ID" value="ABD41956"/>
    <property type="gene ID" value="Mhun_2251"/>
</dbReference>
<dbReference type="GeneID" id="3923953"/>
<dbReference type="KEGG" id="mhu:Mhun_2251"/>
<dbReference type="eggNOG" id="arCOG04072">
    <property type="taxonomic scope" value="Archaea"/>
</dbReference>
<dbReference type="HOGENOM" id="CLU_037562_4_2_2"/>
<dbReference type="InParanoid" id="Q2FU93"/>
<dbReference type="OrthoDB" id="7751at2157"/>
<dbReference type="Proteomes" id="UP000001941">
    <property type="component" value="Chromosome"/>
</dbReference>
<dbReference type="GO" id="GO:1990904">
    <property type="term" value="C:ribonucleoprotein complex"/>
    <property type="evidence" value="ECO:0007669"/>
    <property type="project" value="UniProtKB-KW"/>
</dbReference>
<dbReference type="GO" id="GO:0005840">
    <property type="term" value="C:ribosome"/>
    <property type="evidence" value="ECO:0007669"/>
    <property type="project" value="UniProtKB-KW"/>
</dbReference>
<dbReference type="GO" id="GO:0019843">
    <property type="term" value="F:rRNA binding"/>
    <property type="evidence" value="ECO:0007669"/>
    <property type="project" value="UniProtKB-UniRule"/>
</dbReference>
<dbReference type="GO" id="GO:0003735">
    <property type="term" value="F:structural constituent of ribosome"/>
    <property type="evidence" value="ECO:0007669"/>
    <property type="project" value="InterPro"/>
</dbReference>
<dbReference type="GO" id="GO:0006412">
    <property type="term" value="P:translation"/>
    <property type="evidence" value="ECO:0007669"/>
    <property type="project" value="UniProtKB-UniRule"/>
</dbReference>
<dbReference type="FunFam" id="3.30.70.330:FF:000532">
    <property type="entry name" value="50S ribosomal protein L23"/>
    <property type="match status" value="1"/>
</dbReference>
<dbReference type="Gene3D" id="3.30.70.330">
    <property type="match status" value="1"/>
</dbReference>
<dbReference type="HAMAP" id="MF_01369_A">
    <property type="entry name" value="Ribosomal_uL23_A"/>
    <property type="match status" value="1"/>
</dbReference>
<dbReference type="InterPro" id="IPR012677">
    <property type="entry name" value="Nucleotide-bd_a/b_plait_sf"/>
</dbReference>
<dbReference type="InterPro" id="IPR019985">
    <property type="entry name" value="Ribosomal_uL23"/>
</dbReference>
<dbReference type="InterPro" id="IPR013025">
    <property type="entry name" value="Ribosomal_uL23-like"/>
</dbReference>
<dbReference type="InterPro" id="IPR012678">
    <property type="entry name" value="Ribosomal_uL23/eL15/eS24_sf"/>
</dbReference>
<dbReference type="NCBIfam" id="NF011118">
    <property type="entry name" value="PRK14548.1"/>
    <property type="match status" value="1"/>
</dbReference>
<dbReference type="NCBIfam" id="TIGR03636">
    <property type="entry name" value="uL23_arch"/>
    <property type="match status" value="1"/>
</dbReference>
<dbReference type="PANTHER" id="PTHR11620">
    <property type="entry name" value="60S RIBOSOMAL PROTEIN L23A"/>
    <property type="match status" value="1"/>
</dbReference>
<dbReference type="Pfam" id="PF00276">
    <property type="entry name" value="Ribosomal_L23"/>
    <property type="match status" value="1"/>
</dbReference>
<dbReference type="SUPFAM" id="SSF54189">
    <property type="entry name" value="Ribosomal proteins S24e, L23 and L15e"/>
    <property type="match status" value="1"/>
</dbReference>
<organism>
    <name type="scientific">Methanospirillum hungatei JF-1 (strain ATCC 27890 / DSM 864 / NBRC 100397 / JF-1)</name>
    <dbReference type="NCBI Taxonomy" id="323259"/>
    <lineage>
        <taxon>Archaea</taxon>
        <taxon>Methanobacteriati</taxon>
        <taxon>Methanobacteriota</taxon>
        <taxon>Stenosarchaea group</taxon>
        <taxon>Methanomicrobia</taxon>
        <taxon>Methanomicrobiales</taxon>
        <taxon>Methanospirillaceae</taxon>
        <taxon>Methanospirillum</taxon>
    </lineage>
</organism>
<gene>
    <name evidence="1" type="primary">rpl23</name>
    <name type="ordered locus">Mhun_2251</name>
</gene>
<accession>Q2FU93</accession>
<name>RL23_METHJ</name>
<comment type="function">
    <text evidence="1">Binds to 23S rRNA. One of the proteins that surrounds the polypeptide exit tunnel on the outside of the ribosome.</text>
</comment>
<comment type="subunit">
    <text evidence="1">Part of the 50S ribosomal subunit. Contacts protein L29.</text>
</comment>
<comment type="similarity">
    <text evidence="1">Belongs to the universal ribosomal protein uL23 family.</text>
</comment>
<feature type="chain" id="PRO_0000272948" description="Large ribosomal subunit protein uL23">
    <location>
        <begin position="1"/>
        <end position="82"/>
    </location>
</feature>
<protein>
    <recommendedName>
        <fullName evidence="1">Large ribosomal subunit protein uL23</fullName>
    </recommendedName>
    <alternativeName>
        <fullName evidence="2">50S ribosomal protein L23</fullName>
    </alternativeName>
</protein>
<evidence type="ECO:0000255" key="1">
    <source>
        <dbReference type="HAMAP-Rule" id="MF_01369"/>
    </source>
</evidence>
<evidence type="ECO:0000305" key="2"/>
<proteinExistence type="inferred from homology"/>
<reference key="1">
    <citation type="journal article" date="2016" name="Stand. Genomic Sci.">
        <title>Complete genome sequence of Methanospirillum hungatei type strain JF1.</title>
        <authorList>
            <person name="Gunsalus R.P."/>
            <person name="Cook L.E."/>
            <person name="Crable B."/>
            <person name="Rohlin L."/>
            <person name="McDonald E."/>
            <person name="Mouttaki H."/>
            <person name="Sieber J.R."/>
            <person name="Poweleit N."/>
            <person name="Zhou H."/>
            <person name="Lapidus A.L."/>
            <person name="Daligault H.E."/>
            <person name="Land M."/>
            <person name="Gilna P."/>
            <person name="Ivanova N."/>
            <person name="Kyrpides N."/>
            <person name="Culley D.E."/>
            <person name="McInerney M.J."/>
        </authorList>
    </citation>
    <scope>NUCLEOTIDE SEQUENCE [LARGE SCALE GENOMIC DNA]</scope>
    <source>
        <strain>ATCC 27890 / DSM 864 / NBRC 100397 / JF-1</strain>
    </source>
</reference>
<keyword id="KW-1185">Reference proteome</keyword>
<keyword id="KW-0687">Ribonucleoprotein</keyword>
<keyword id="KW-0689">Ribosomal protein</keyword>
<keyword id="KW-0694">RNA-binding</keyword>
<keyword id="KW-0699">rRNA-binding</keyword>
<sequence>MILKYPYATEKASMIVERDGQLQFIVDRKASKGQIKVAIEKMFDQPVTRVRTLMNNRGEKKAMVSFSNPKAAEEILSRLGIM</sequence>